<evidence type="ECO:0000250" key="1">
    <source>
        <dbReference type="UniProtKB" id="P07256"/>
    </source>
</evidence>
<evidence type="ECO:0000250" key="2">
    <source>
        <dbReference type="UniProtKB" id="P10507"/>
    </source>
</evidence>
<evidence type="ECO:0000250" key="3">
    <source>
        <dbReference type="UniProtKB" id="Q03346"/>
    </source>
</evidence>
<evidence type="ECO:0000255" key="4">
    <source>
        <dbReference type="PROSITE-ProRule" id="PRU10096"/>
    </source>
</evidence>
<evidence type="ECO:0000256" key="5">
    <source>
        <dbReference type="SAM" id="MobiDB-lite"/>
    </source>
</evidence>
<evidence type="ECO:0000269" key="6">
    <source>
    </source>
</evidence>
<evidence type="ECO:0000269" key="7">
    <source>
    </source>
</evidence>
<evidence type="ECO:0000269" key="8">
    <source>
    </source>
</evidence>
<evidence type="ECO:0000269" key="9">
    <source>
    </source>
</evidence>
<evidence type="ECO:0000269" key="10">
    <source>
    </source>
</evidence>
<evidence type="ECO:0000305" key="11"/>
<evidence type="ECO:0000305" key="12">
    <source>
    </source>
</evidence>
<evidence type="ECO:0000312" key="13">
    <source>
        <dbReference type="Araport" id="AT3G02090"/>
    </source>
</evidence>
<evidence type="ECO:0000312" key="14">
    <source>
        <dbReference type="EMBL" id="AAF14827.1"/>
    </source>
</evidence>
<evidence type="ECO:0007829" key="15">
    <source>
        <dbReference type="PDB" id="8BEP"/>
    </source>
</evidence>
<accession>Q42290</accession>
<accession>Q0WWT6</accession>
<accession>Q9SGA7</accession>
<name>MPPB_ARATH</name>
<reference key="1">
    <citation type="journal article" date="2000" name="Nature">
        <title>Sequence and analysis of chromosome 3 of the plant Arabidopsis thaliana.</title>
        <authorList>
            <person name="Salanoubat M."/>
            <person name="Lemcke K."/>
            <person name="Rieger M."/>
            <person name="Ansorge W."/>
            <person name="Unseld M."/>
            <person name="Fartmann B."/>
            <person name="Valle G."/>
            <person name="Bloecker H."/>
            <person name="Perez-Alonso M."/>
            <person name="Obermaier B."/>
            <person name="Delseny M."/>
            <person name="Boutry M."/>
            <person name="Grivell L.A."/>
            <person name="Mache R."/>
            <person name="Puigdomenech P."/>
            <person name="De Simone V."/>
            <person name="Choisne N."/>
            <person name="Artiguenave F."/>
            <person name="Robert C."/>
            <person name="Brottier P."/>
            <person name="Wincker P."/>
            <person name="Cattolico L."/>
            <person name="Weissenbach J."/>
            <person name="Saurin W."/>
            <person name="Quetier F."/>
            <person name="Schaefer M."/>
            <person name="Mueller-Auer S."/>
            <person name="Gabel C."/>
            <person name="Fuchs M."/>
            <person name="Benes V."/>
            <person name="Wurmbach E."/>
            <person name="Drzonek H."/>
            <person name="Erfle H."/>
            <person name="Jordan N."/>
            <person name="Bangert S."/>
            <person name="Wiedelmann R."/>
            <person name="Kranz H."/>
            <person name="Voss H."/>
            <person name="Holland R."/>
            <person name="Brandt P."/>
            <person name="Nyakatura G."/>
            <person name="Vezzi A."/>
            <person name="D'Angelo M."/>
            <person name="Pallavicini A."/>
            <person name="Toppo S."/>
            <person name="Simionati B."/>
            <person name="Conrad A."/>
            <person name="Hornischer K."/>
            <person name="Kauer G."/>
            <person name="Loehnert T.-H."/>
            <person name="Nordsiek G."/>
            <person name="Reichelt J."/>
            <person name="Scharfe M."/>
            <person name="Schoen O."/>
            <person name="Bargues M."/>
            <person name="Terol J."/>
            <person name="Climent J."/>
            <person name="Navarro P."/>
            <person name="Collado C."/>
            <person name="Perez-Perez A."/>
            <person name="Ottenwaelder B."/>
            <person name="Duchemin D."/>
            <person name="Cooke R."/>
            <person name="Laudie M."/>
            <person name="Berger-Llauro C."/>
            <person name="Purnelle B."/>
            <person name="Masuy D."/>
            <person name="de Haan M."/>
            <person name="Maarse A.C."/>
            <person name="Alcaraz J.-P."/>
            <person name="Cottet A."/>
            <person name="Casacuberta E."/>
            <person name="Monfort A."/>
            <person name="Argiriou A."/>
            <person name="Flores M."/>
            <person name="Liguori R."/>
            <person name="Vitale D."/>
            <person name="Mannhaupt G."/>
            <person name="Haase D."/>
            <person name="Schoof H."/>
            <person name="Rudd S."/>
            <person name="Zaccaria P."/>
            <person name="Mewes H.-W."/>
            <person name="Mayer K.F.X."/>
            <person name="Kaul S."/>
            <person name="Town C.D."/>
            <person name="Koo H.L."/>
            <person name="Tallon L.J."/>
            <person name="Jenkins J."/>
            <person name="Rooney T."/>
            <person name="Rizzo M."/>
            <person name="Walts A."/>
            <person name="Utterback T."/>
            <person name="Fujii C.Y."/>
            <person name="Shea T.P."/>
            <person name="Creasy T.H."/>
            <person name="Haas B."/>
            <person name="Maiti R."/>
            <person name="Wu D."/>
            <person name="Peterson J."/>
            <person name="Van Aken S."/>
            <person name="Pai G."/>
            <person name="Militscher J."/>
            <person name="Sellers P."/>
            <person name="Gill J.E."/>
            <person name="Feldblyum T.V."/>
            <person name="Preuss D."/>
            <person name="Lin X."/>
            <person name="Nierman W.C."/>
            <person name="Salzberg S.L."/>
            <person name="White O."/>
            <person name="Venter J.C."/>
            <person name="Fraser C.M."/>
            <person name="Kaneko T."/>
            <person name="Nakamura Y."/>
            <person name="Sato S."/>
            <person name="Kato T."/>
            <person name="Asamizu E."/>
            <person name="Sasamoto S."/>
            <person name="Kimura T."/>
            <person name="Idesawa K."/>
            <person name="Kawashima K."/>
            <person name="Kishida Y."/>
            <person name="Kiyokawa C."/>
            <person name="Kohara M."/>
            <person name="Matsumoto M."/>
            <person name="Matsuno A."/>
            <person name="Muraki A."/>
            <person name="Nakayama S."/>
            <person name="Nakazaki N."/>
            <person name="Shinpo S."/>
            <person name="Takeuchi C."/>
            <person name="Wada T."/>
            <person name="Watanabe A."/>
            <person name="Yamada M."/>
            <person name="Yasuda M."/>
            <person name="Tabata S."/>
        </authorList>
    </citation>
    <scope>NUCLEOTIDE SEQUENCE [LARGE SCALE GENOMIC DNA]</scope>
    <source>
        <strain>cv. Columbia</strain>
    </source>
</reference>
<reference key="2">
    <citation type="journal article" date="2017" name="Plant J.">
        <title>Araport11: a complete reannotation of the Arabidopsis thaliana reference genome.</title>
        <authorList>
            <person name="Cheng C.Y."/>
            <person name="Krishnakumar V."/>
            <person name="Chan A.P."/>
            <person name="Thibaud-Nissen F."/>
            <person name="Schobel S."/>
            <person name="Town C.D."/>
        </authorList>
    </citation>
    <scope>GENOME REANNOTATION</scope>
    <source>
        <strain>cv. Columbia</strain>
    </source>
</reference>
<reference key="3">
    <citation type="journal article" date="2003" name="Science">
        <title>Empirical analysis of transcriptional activity in the Arabidopsis genome.</title>
        <authorList>
            <person name="Yamada K."/>
            <person name="Lim J."/>
            <person name="Dale J.M."/>
            <person name="Chen H."/>
            <person name="Shinn P."/>
            <person name="Palm C.J."/>
            <person name="Southwick A.M."/>
            <person name="Wu H.C."/>
            <person name="Kim C.J."/>
            <person name="Nguyen M."/>
            <person name="Pham P.K."/>
            <person name="Cheuk R.F."/>
            <person name="Karlin-Newmann G."/>
            <person name="Liu S.X."/>
            <person name="Lam B."/>
            <person name="Sakano H."/>
            <person name="Wu T."/>
            <person name="Yu G."/>
            <person name="Miranda M."/>
            <person name="Quach H.L."/>
            <person name="Tripp M."/>
            <person name="Chang C.H."/>
            <person name="Lee J.M."/>
            <person name="Toriumi M.J."/>
            <person name="Chan M.M."/>
            <person name="Tang C.C."/>
            <person name="Onodera C.S."/>
            <person name="Deng J.M."/>
            <person name="Akiyama K."/>
            <person name="Ansari Y."/>
            <person name="Arakawa T."/>
            <person name="Banh J."/>
            <person name="Banno F."/>
            <person name="Bowser L."/>
            <person name="Brooks S.Y."/>
            <person name="Carninci P."/>
            <person name="Chao Q."/>
            <person name="Choy N."/>
            <person name="Enju A."/>
            <person name="Goldsmith A.D."/>
            <person name="Gurjal M."/>
            <person name="Hansen N.F."/>
            <person name="Hayashizaki Y."/>
            <person name="Johnson-Hopson C."/>
            <person name="Hsuan V.W."/>
            <person name="Iida K."/>
            <person name="Karnes M."/>
            <person name="Khan S."/>
            <person name="Koesema E."/>
            <person name="Ishida J."/>
            <person name="Jiang P.X."/>
            <person name="Jones T."/>
            <person name="Kawai J."/>
            <person name="Kamiya A."/>
            <person name="Meyers C."/>
            <person name="Nakajima M."/>
            <person name="Narusaka M."/>
            <person name="Seki M."/>
            <person name="Sakurai T."/>
            <person name="Satou M."/>
            <person name="Tamse R."/>
            <person name="Vaysberg M."/>
            <person name="Wallender E.K."/>
            <person name="Wong C."/>
            <person name="Yamamura Y."/>
            <person name="Yuan S."/>
            <person name="Shinozaki K."/>
            <person name="Davis R.W."/>
            <person name="Theologis A."/>
            <person name="Ecker J.R."/>
        </authorList>
    </citation>
    <scope>NUCLEOTIDE SEQUENCE [LARGE SCALE MRNA] (ISOFORM 1)</scope>
    <source>
        <strain>cv. Columbia</strain>
    </source>
</reference>
<reference key="4">
    <citation type="submission" date="2006-07" db="EMBL/GenBank/DDBJ databases">
        <title>Large-scale analysis of RIKEN Arabidopsis full-length (RAFL) cDNAs.</title>
        <authorList>
            <person name="Totoki Y."/>
            <person name="Seki M."/>
            <person name="Ishida J."/>
            <person name="Nakajima M."/>
            <person name="Enju A."/>
            <person name="Kamiya A."/>
            <person name="Narusaka M."/>
            <person name="Shin-i T."/>
            <person name="Nakagawa M."/>
            <person name="Sakamoto N."/>
            <person name="Oishi K."/>
            <person name="Kohara Y."/>
            <person name="Kobayashi M."/>
            <person name="Toyoda A."/>
            <person name="Sakaki Y."/>
            <person name="Sakurai T."/>
            <person name="Iida K."/>
            <person name="Akiyama K."/>
            <person name="Satou M."/>
            <person name="Toyoda T."/>
            <person name="Konagaya A."/>
            <person name="Carninci P."/>
            <person name="Kawai J."/>
            <person name="Hayashizaki Y."/>
            <person name="Shinozaki K."/>
        </authorList>
    </citation>
    <scope>NUCLEOTIDE SEQUENCE [LARGE SCALE MRNA] OF 70-531</scope>
    <source>
        <strain>cv. Columbia</strain>
    </source>
</reference>
<reference key="5">
    <citation type="journal article" date="1996" name="Plant J.">
        <title>Further progress towards a catalogue of all Arabidopsis genes: analysis of a set of 5000 non-redundant ESTs.</title>
        <authorList>
            <person name="Cooke R."/>
            <person name="Raynal M."/>
            <person name="Laudie M."/>
            <person name="Grellet F."/>
            <person name="Delseny M."/>
            <person name="Morris P.-C."/>
            <person name="Guerrier D."/>
            <person name="Giraudat J."/>
            <person name="Quigley F."/>
            <person name="Clabault G."/>
            <person name="Li Y.-F."/>
            <person name="Mache R."/>
            <person name="Krivitzky M."/>
            <person name="Gy I.J.-J."/>
            <person name="Kreis M."/>
            <person name="Lecharny A."/>
            <person name="Parmentier Y."/>
            <person name="Marbach J."/>
            <person name="Fleck J."/>
            <person name="Clement B."/>
            <person name="Philipps G."/>
            <person name="Herve C."/>
            <person name="Bardet C."/>
            <person name="Tremousaygue D."/>
            <person name="Lescure B."/>
            <person name="Lacomme C."/>
            <person name="Roby D."/>
            <person name="Jourjon M.-F."/>
            <person name="Chabrier P."/>
            <person name="Charpenteau J.-L."/>
            <person name="Desprez T."/>
            <person name="Amselem J."/>
            <person name="Chiapello H."/>
            <person name="Hoefte H."/>
        </authorList>
    </citation>
    <scope>NUCLEOTIDE SEQUENCE [LARGE SCALE MRNA] OF 321-421</scope>
    <source>
        <strain>cv. Columbia</strain>
        <tissue>Leaf</tissue>
    </source>
</reference>
<reference key="6">
    <citation type="journal article" date="2003" name="Plant Physiol.">
        <title>New insights into the respiratory chain of plant mitochondria. Supercomplexes and a unique composition of complex II.</title>
        <authorList>
            <person name="Eubel H."/>
            <person name="Jansch L."/>
            <person name="Braun H.P."/>
        </authorList>
    </citation>
    <scope>SUBUNIT</scope>
</reference>
<reference key="7">
    <citation type="journal article" date="2004" name="Plant Cell">
        <title>Experimental analysis of the Arabidopsis mitochondrial proteome highlights signaling and regulatory components, provides assessment of targeting prediction programs, and indicates plant-specific mitochondrial proteins.</title>
        <authorList>
            <person name="Heazlewood J.L."/>
            <person name="Tonti-Filippini J.S."/>
            <person name="Gout A.M."/>
            <person name="Day D.A."/>
            <person name="Whelan J."/>
            <person name="Millar A.H."/>
        </authorList>
    </citation>
    <scope>IDENTIFICATION BY MASS SPECTROMETRY</scope>
    <scope>SUBCELLULAR LOCATION [LARGE SCALE ANALYSIS]</scope>
    <source>
        <strain>cv. Landsberg erecta</strain>
    </source>
</reference>
<reference key="8">
    <citation type="journal article" date="2008" name="J. Proteome Res.">
        <title>Resolving and identifying protein components of plant mitochondrial respiratory complexes using three dimensions of gel electrophoresis.</title>
        <authorList>
            <person name="Meyer E.H."/>
            <person name="Taylor N.L."/>
            <person name="Millar A.H."/>
        </authorList>
    </citation>
    <scope>SUBCELLULAR LOCATION</scope>
    <scope>SUBUNIT</scope>
    <scope>IDENTIFICATION BY MASS SPECTROMETRY</scope>
</reference>
<reference key="9">
    <citation type="journal article" date="2008" name="Plant Physiol.">
        <title>Arabidopsis PPR40 connects abiotic stress responses to mitochondrial electron transport.</title>
        <authorList>
            <person name="Zsigmond L."/>
            <person name="Rigo G."/>
            <person name="Szarka A."/>
            <person name="Szekely G."/>
            <person name="Oetvoes K."/>
            <person name="Darula Z."/>
            <person name="Medzihradszky K.F."/>
            <person name="Koncz C."/>
            <person name="Koncz Z."/>
            <person name="Szabados L."/>
        </authorList>
    </citation>
    <scope>SUBUNIT</scope>
    <scope>IDENTIFICATION BY MASS SPECTROMETRY</scope>
    <scope>NOMENCLATURE</scope>
    <source>
        <strain>cv. Columbia</strain>
    </source>
</reference>
<reference key="10">
    <citation type="journal article" date="2015" name="J. Exp. Bot.">
        <title>Identification of cleavage sites and substrate proteins for two mitochondrial intermediate peptidases in Arabidopsis thaliana.</title>
        <authorList>
            <person name="Carrie C."/>
            <person name="Venne A.S."/>
            <person name="Zahedi R.P."/>
            <person name="Soll J."/>
        </authorList>
    </citation>
    <scope>IDENTIFICATION BY MASS SPECTROMETRY</scope>
    <scope>CLEAVAGE OF TRANSIT PEPTIDE AFTER TYR-78</scope>
</reference>
<sequence>MAMKNLLSLARRSQRRLFLTQATRSSSSFSAIDSVPASASPTALSPPPPHLMPYDHAAEIIKNKIKKLENPDKRFLKYASPHPILASHNHILSAPETRVTTLPNGLRVATESNLSAKTATVGVWIDAGSRFESDETNGTAHFLEHMIFKGTDRRTVRALEEEIEDIGGHLNAYTSREQTTYYAKVLDSNVNQALDVLADILQNSKFEEQRINRERDVILREMQEVEGQTDEVVLDHLHATAFQYTPLGRTILGPAQNVKSITREDLQNYIKTHYTASRMVIAAAGAVKHEEVVEQVKKLFTKLSSDPTTTSQLVANEPASFTGSEVRMIDDDLPLAQFAVAFEGASWTDPDSVALMVMQTMLGSWNKNVGGGKHVGSDLTQRVAINEIAESIMAFNTNYKDTGLFGVYAVAKADCLDDLSYAIMYEVTKLAYRVSDADVTRARNQLKSSLLLHMDGTSPIAEDIGRQLLTYGRRIPTAELFARIDAVDASTVKRVANKYIYDKDIAISAIGPIQDLPDYNKFRRRTYWNRY</sequence>
<proteinExistence type="evidence at protein level"/>
<feature type="transit peptide" description="Mitochondrion" evidence="10">
    <location>
        <begin position="1"/>
        <end position="78"/>
    </location>
</feature>
<feature type="chain" id="PRO_0000045852" description="Probable mitochondrial-processing peptidase subunit beta, mitochondrial">
    <location>
        <begin position="79"/>
        <end position="531"/>
    </location>
</feature>
<feature type="region of interest" description="Disordered" evidence="5">
    <location>
        <begin position="30"/>
        <end position="50"/>
    </location>
</feature>
<feature type="active site" description="Proton acceptor" evidence="4">
    <location>
        <position position="144"/>
    </location>
</feature>
<feature type="active site" evidence="11">
    <location>
        <position position="214"/>
    </location>
</feature>
<feature type="binding site" evidence="4">
    <location>
        <position position="141"/>
    </location>
    <ligand>
        <name>Zn(2+)</name>
        <dbReference type="ChEBI" id="CHEBI:29105"/>
    </ligand>
</feature>
<feature type="binding site" evidence="4">
    <location>
        <position position="145"/>
    </location>
    <ligand>
        <name>Zn(2+)</name>
        <dbReference type="ChEBI" id="CHEBI:29105"/>
    </ligand>
</feature>
<feature type="binding site" evidence="2">
    <location>
        <position position="221"/>
    </location>
    <ligand>
        <name>Zn(2+)</name>
        <dbReference type="ChEBI" id="CHEBI:29105"/>
    </ligand>
</feature>
<feature type="splice variant" id="VSP_018097" description="In isoform 2." evidence="11">
    <original>DIAISAIGPIQDLPDYNKFRRRTYWNRY</original>
    <variation>VRHCNLSYWSNPRFARLQQIQTQNLLEPVLRL</variation>
    <location>
        <begin position="504"/>
        <end position="531"/>
    </location>
</feature>
<feature type="sequence conflict" description="In Ref. 4; BAE98412." evidence="11" ref="4">
    <original>E</original>
    <variation>G</variation>
    <location>
        <position position="132"/>
    </location>
</feature>
<feature type="helix" evidence="15">
    <location>
        <begin position="53"/>
        <end position="69"/>
    </location>
</feature>
<feature type="helix" evidence="15">
    <location>
        <begin position="73"/>
        <end position="76"/>
    </location>
</feature>
<feature type="turn" evidence="15">
    <location>
        <begin position="89"/>
        <end position="92"/>
    </location>
</feature>
<feature type="strand" evidence="15">
    <location>
        <begin position="97"/>
        <end position="101"/>
    </location>
</feature>
<feature type="strand" evidence="15">
    <location>
        <begin position="107"/>
        <end position="112"/>
    </location>
</feature>
<feature type="strand" evidence="15">
    <location>
        <begin position="117"/>
        <end position="126"/>
    </location>
</feature>
<feature type="helix" evidence="15">
    <location>
        <begin position="129"/>
        <end position="131"/>
    </location>
</feature>
<feature type="turn" evidence="15">
    <location>
        <begin position="134"/>
        <end position="138"/>
    </location>
</feature>
<feature type="helix" evidence="15">
    <location>
        <begin position="139"/>
        <end position="146"/>
    </location>
</feature>
<feature type="strand" evidence="15">
    <location>
        <begin position="151"/>
        <end position="153"/>
    </location>
</feature>
<feature type="helix" evidence="15">
    <location>
        <begin position="156"/>
        <end position="165"/>
    </location>
</feature>
<feature type="strand" evidence="15">
    <location>
        <begin position="169"/>
        <end position="174"/>
    </location>
</feature>
<feature type="strand" evidence="15">
    <location>
        <begin position="179"/>
        <end position="186"/>
    </location>
</feature>
<feature type="helix" evidence="15">
    <location>
        <begin position="187"/>
        <end position="189"/>
    </location>
</feature>
<feature type="helix" evidence="15">
    <location>
        <begin position="190"/>
        <end position="202"/>
    </location>
</feature>
<feature type="helix" evidence="15">
    <location>
        <begin position="208"/>
        <end position="223"/>
    </location>
</feature>
<feature type="helix" evidence="15">
    <location>
        <begin position="229"/>
        <end position="241"/>
    </location>
</feature>
<feature type="turn" evidence="15">
    <location>
        <begin position="242"/>
        <end position="244"/>
    </location>
</feature>
<feature type="helix" evidence="15">
    <location>
        <begin position="246"/>
        <end position="248"/>
    </location>
</feature>
<feature type="helix" evidence="15">
    <location>
        <begin position="255"/>
        <end position="259"/>
    </location>
</feature>
<feature type="helix" evidence="15">
    <location>
        <begin position="263"/>
        <end position="273"/>
    </location>
</feature>
<feature type="helix" evidence="15">
    <location>
        <begin position="276"/>
        <end position="278"/>
    </location>
</feature>
<feature type="strand" evidence="15">
    <location>
        <begin position="279"/>
        <end position="286"/>
    </location>
</feature>
<feature type="helix" evidence="15">
    <location>
        <begin position="289"/>
        <end position="299"/>
    </location>
</feature>
<feature type="helix" evidence="15">
    <location>
        <begin position="310"/>
        <end position="316"/>
    </location>
</feature>
<feature type="strand" evidence="15">
    <location>
        <begin position="324"/>
        <end position="329"/>
    </location>
</feature>
<feature type="strand" evidence="15">
    <location>
        <begin position="333"/>
        <end position="343"/>
    </location>
</feature>
<feature type="helix" evidence="15">
    <location>
        <begin position="351"/>
        <end position="362"/>
    </location>
</feature>
<feature type="strand" evidence="15">
    <location>
        <begin position="364"/>
        <end position="366"/>
    </location>
</feature>
<feature type="helix" evidence="15">
    <location>
        <begin position="372"/>
        <end position="374"/>
    </location>
</feature>
<feature type="helix" evidence="15">
    <location>
        <begin position="378"/>
        <end position="386"/>
    </location>
</feature>
<feature type="strand" evidence="15">
    <location>
        <begin position="390"/>
        <end position="398"/>
    </location>
</feature>
<feature type="strand" evidence="15">
    <location>
        <begin position="403"/>
        <end position="411"/>
    </location>
</feature>
<feature type="helix" evidence="15">
    <location>
        <begin position="413"/>
        <end position="415"/>
    </location>
</feature>
<feature type="helix" evidence="15">
    <location>
        <begin position="416"/>
        <end position="429"/>
    </location>
</feature>
<feature type="turn" evidence="15">
    <location>
        <begin position="430"/>
        <end position="432"/>
    </location>
</feature>
<feature type="helix" evidence="15">
    <location>
        <begin position="436"/>
        <end position="453"/>
    </location>
</feature>
<feature type="helix" evidence="15">
    <location>
        <begin position="457"/>
        <end position="470"/>
    </location>
</feature>
<feature type="helix" evidence="15">
    <location>
        <begin position="477"/>
        <end position="485"/>
    </location>
</feature>
<feature type="helix" evidence="15">
    <location>
        <begin position="489"/>
        <end position="499"/>
    </location>
</feature>
<feature type="turn" evidence="15">
    <location>
        <begin position="500"/>
        <end position="502"/>
    </location>
</feature>
<feature type="strand" evidence="15">
    <location>
        <begin position="506"/>
        <end position="512"/>
    </location>
</feature>
<feature type="helix" evidence="15">
    <location>
        <begin position="519"/>
        <end position="524"/>
    </location>
</feature>
<organism>
    <name type="scientific">Arabidopsis thaliana</name>
    <name type="common">Mouse-ear cress</name>
    <dbReference type="NCBI Taxonomy" id="3702"/>
    <lineage>
        <taxon>Eukaryota</taxon>
        <taxon>Viridiplantae</taxon>
        <taxon>Streptophyta</taxon>
        <taxon>Embryophyta</taxon>
        <taxon>Tracheophyta</taxon>
        <taxon>Spermatophyta</taxon>
        <taxon>Magnoliopsida</taxon>
        <taxon>eudicotyledons</taxon>
        <taxon>Gunneridae</taxon>
        <taxon>Pentapetalae</taxon>
        <taxon>rosids</taxon>
        <taxon>malvids</taxon>
        <taxon>Brassicales</taxon>
        <taxon>Brassicaceae</taxon>
        <taxon>Camelineae</taxon>
        <taxon>Arabidopsis</taxon>
    </lineage>
</organism>
<protein>
    <recommendedName>
        <fullName>Probable mitochondrial-processing peptidase subunit beta, mitochondrial</fullName>
        <ecNumber evidence="2">3.4.24.64</ecNumber>
    </recommendedName>
    <alternativeName>
        <fullName>Beta-MPP</fullName>
    </alternativeName>
    <alternativeName>
        <fullName>Complex III subunit I</fullName>
    </alternativeName>
    <alternativeName>
        <fullName>Core protein I</fullName>
    </alternativeName>
    <alternativeName>
        <fullName>Cytochrome b-c1 complex subunit 1, mitochondrial</fullName>
    </alternativeName>
    <alternativeName>
        <fullName>Ubiquinol-cytochrome c oxidoreductase core protein 1</fullName>
    </alternativeName>
</protein>
<dbReference type="EC" id="3.4.24.64" evidence="2"/>
<dbReference type="EMBL" id="AC011664">
    <property type="protein sequence ID" value="AAF14827.1"/>
    <property type="molecule type" value="Genomic_DNA"/>
</dbReference>
<dbReference type="EMBL" id="CP002686">
    <property type="protein sequence ID" value="AEE73761.1"/>
    <property type="molecule type" value="Genomic_DNA"/>
</dbReference>
<dbReference type="EMBL" id="CP002686">
    <property type="protein sequence ID" value="AEE73762.1"/>
    <property type="molecule type" value="Genomic_DNA"/>
</dbReference>
<dbReference type="EMBL" id="AY126990">
    <property type="protein sequence ID" value="AAM83217.1"/>
    <property type="molecule type" value="mRNA"/>
</dbReference>
<dbReference type="EMBL" id="BT000830">
    <property type="protein sequence ID" value="AAN33205.1"/>
    <property type="molecule type" value="mRNA"/>
</dbReference>
<dbReference type="EMBL" id="BT000662">
    <property type="protein sequence ID" value="AAN31809.1"/>
    <property type="molecule type" value="mRNA"/>
</dbReference>
<dbReference type="EMBL" id="BT001915">
    <property type="protein sequence ID" value="AAN71914.1"/>
    <property type="molecule type" value="mRNA"/>
</dbReference>
<dbReference type="EMBL" id="AK226251">
    <property type="protein sequence ID" value="BAE98412.1"/>
    <property type="molecule type" value="mRNA"/>
</dbReference>
<dbReference type="EMBL" id="Z35354">
    <property type="protein sequence ID" value="CAA84561.1"/>
    <property type="molecule type" value="mRNA"/>
</dbReference>
<dbReference type="RefSeq" id="NP_186858.1">
    <molecule id="Q42290-1"/>
    <property type="nucleotide sequence ID" value="NM_111075.3"/>
</dbReference>
<dbReference type="RefSeq" id="NP_850500.1">
    <molecule id="Q42290-2"/>
    <property type="nucleotide sequence ID" value="NM_180169.1"/>
</dbReference>
<dbReference type="PDB" id="8BEP">
    <property type="method" value="EM"/>
    <property type="resolution" value="2.29 A"/>
    <property type="chains" value="B/L=1-531"/>
</dbReference>
<dbReference type="PDB" id="8BPX">
    <property type="method" value="EM"/>
    <property type="resolution" value="2.09 A"/>
    <property type="chains" value="AB/BB=1-531"/>
</dbReference>
<dbReference type="PDB" id="8BQ5">
    <property type="method" value="EM"/>
    <property type="resolution" value="2.73 A"/>
    <property type="chains" value="AB/BB=1-531"/>
</dbReference>
<dbReference type="PDB" id="8BQ6">
    <property type="method" value="EM"/>
    <property type="resolution" value="2.80 A"/>
    <property type="chains" value="AB/BB=1-531"/>
</dbReference>
<dbReference type="PDBsum" id="8BEP"/>
<dbReference type="PDBsum" id="8BPX"/>
<dbReference type="PDBsum" id="8BQ5"/>
<dbReference type="PDBsum" id="8BQ6"/>
<dbReference type="EMDB" id="EMD-16008"/>
<dbReference type="EMDB" id="EMD-16168"/>
<dbReference type="EMDB" id="EMD-16171"/>
<dbReference type="EMDB" id="EMD-16172"/>
<dbReference type="SMR" id="Q42290"/>
<dbReference type="BioGRID" id="6417">
    <property type="interactions" value="8"/>
</dbReference>
<dbReference type="FunCoup" id="Q42290">
    <property type="interactions" value="4000"/>
</dbReference>
<dbReference type="IntAct" id="Q42290">
    <property type="interactions" value="5"/>
</dbReference>
<dbReference type="MINT" id="Q42290"/>
<dbReference type="STRING" id="3702.Q42290"/>
<dbReference type="MEROPS" id="M16.003"/>
<dbReference type="PaxDb" id="3702-AT3G02090.2"/>
<dbReference type="ProteomicsDB" id="238277">
    <molecule id="Q42290-1"/>
</dbReference>
<dbReference type="EnsemblPlants" id="AT3G02090.1">
    <molecule id="Q42290-1"/>
    <property type="protein sequence ID" value="AT3G02090.1"/>
    <property type="gene ID" value="AT3G02090"/>
</dbReference>
<dbReference type="EnsemblPlants" id="AT3G02090.2">
    <molecule id="Q42290-2"/>
    <property type="protein sequence ID" value="AT3G02090.2"/>
    <property type="gene ID" value="AT3G02090"/>
</dbReference>
<dbReference type="GeneID" id="821084"/>
<dbReference type="Gramene" id="AT3G02090.1">
    <molecule id="Q42290-1"/>
    <property type="protein sequence ID" value="AT3G02090.1"/>
    <property type="gene ID" value="AT3G02090"/>
</dbReference>
<dbReference type="Gramene" id="AT3G02090.2">
    <molecule id="Q42290-2"/>
    <property type="protein sequence ID" value="AT3G02090.2"/>
    <property type="gene ID" value="AT3G02090"/>
</dbReference>
<dbReference type="KEGG" id="ath:AT3G02090"/>
<dbReference type="Araport" id="AT3G02090"/>
<dbReference type="TAIR" id="AT3G02090">
    <property type="gene designation" value="MPPBETA"/>
</dbReference>
<dbReference type="eggNOG" id="KOG0960">
    <property type="taxonomic scope" value="Eukaryota"/>
</dbReference>
<dbReference type="HOGENOM" id="CLU_009902_4_2_1"/>
<dbReference type="InParanoid" id="Q42290"/>
<dbReference type="OMA" id="RYGWGEL"/>
<dbReference type="OrthoDB" id="10251424at2759"/>
<dbReference type="PhylomeDB" id="Q42290"/>
<dbReference type="BioCyc" id="ARA:AT3G02090-MONOMER"/>
<dbReference type="BioCyc" id="MetaCyc:AT3G02090-MONOMER"/>
<dbReference type="CD-CODE" id="4299E36E">
    <property type="entry name" value="Nucleolus"/>
</dbReference>
<dbReference type="PRO" id="PR:Q42290"/>
<dbReference type="Proteomes" id="UP000006548">
    <property type="component" value="Chromosome 3"/>
</dbReference>
<dbReference type="ExpressionAtlas" id="Q42290">
    <property type="expression patterns" value="baseline and differential"/>
</dbReference>
<dbReference type="GO" id="GO:0009507">
    <property type="term" value="C:chloroplast"/>
    <property type="evidence" value="ECO:0007005"/>
    <property type="project" value="TAIR"/>
</dbReference>
<dbReference type="GO" id="GO:0005829">
    <property type="term" value="C:cytosol"/>
    <property type="evidence" value="ECO:0007005"/>
    <property type="project" value="TAIR"/>
</dbReference>
<dbReference type="GO" id="GO:0005743">
    <property type="term" value="C:mitochondrial inner membrane"/>
    <property type="evidence" value="ECO:0007005"/>
    <property type="project" value="TAIR"/>
</dbReference>
<dbReference type="GO" id="GO:0005758">
    <property type="term" value="C:mitochondrial intermembrane space"/>
    <property type="evidence" value="ECO:0007005"/>
    <property type="project" value="TAIR"/>
</dbReference>
<dbReference type="GO" id="GO:0005759">
    <property type="term" value="C:mitochondrial matrix"/>
    <property type="evidence" value="ECO:0007005"/>
    <property type="project" value="TAIR"/>
</dbReference>
<dbReference type="GO" id="GO:0005741">
    <property type="term" value="C:mitochondrial outer membrane"/>
    <property type="evidence" value="ECO:0007005"/>
    <property type="project" value="TAIR"/>
</dbReference>
<dbReference type="GO" id="GO:0005739">
    <property type="term" value="C:mitochondrion"/>
    <property type="evidence" value="ECO:0007005"/>
    <property type="project" value="TAIR"/>
</dbReference>
<dbReference type="GO" id="GO:0005730">
    <property type="term" value="C:nucleolus"/>
    <property type="evidence" value="ECO:0007005"/>
    <property type="project" value="TAIR"/>
</dbReference>
<dbReference type="GO" id="GO:0009505">
    <property type="term" value="C:plant-type cell wall"/>
    <property type="evidence" value="ECO:0007005"/>
    <property type="project" value="TAIR"/>
</dbReference>
<dbReference type="GO" id="GO:0000325">
    <property type="term" value="C:plant-type vacuole"/>
    <property type="evidence" value="ECO:0007005"/>
    <property type="project" value="TAIR"/>
</dbReference>
<dbReference type="GO" id="GO:0004222">
    <property type="term" value="F:metalloendopeptidase activity"/>
    <property type="evidence" value="ECO:0007669"/>
    <property type="project" value="UniProtKB-EC"/>
</dbReference>
<dbReference type="GO" id="GO:0016491">
    <property type="term" value="F:oxidoreductase activity"/>
    <property type="evidence" value="ECO:0007669"/>
    <property type="project" value="UniProtKB-KW"/>
</dbReference>
<dbReference type="GO" id="GO:0008270">
    <property type="term" value="F:zinc ion binding"/>
    <property type="evidence" value="ECO:0007005"/>
    <property type="project" value="TAIR"/>
</dbReference>
<dbReference type="GO" id="GO:0006508">
    <property type="term" value="P:proteolysis"/>
    <property type="evidence" value="ECO:0007669"/>
    <property type="project" value="UniProtKB-KW"/>
</dbReference>
<dbReference type="FunFam" id="3.30.830.10:FF:000002">
    <property type="entry name" value="Mitochondrial-processing peptidase subunit beta"/>
    <property type="match status" value="1"/>
</dbReference>
<dbReference type="FunFam" id="3.30.830.10:FF:000001">
    <property type="entry name" value="Mitochondrial-processing peptidase subunit beta, mitochondrial"/>
    <property type="match status" value="1"/>
</dbReference>
<dbReference type="Gene3D" id="3.30.830.10">
    <property type="entry name" value="Metalloenzyme, LuxS/M16 peptidase-like"/>
    <property type="match status" value="2"/>
</dbReference>
<dbReference type="InterPro" id="IPR011249">
    <property type="entry name" value="Metalloenz_LuxS/M16"/>
</dbReference>
<dbReference type="InterPro" id="IPR050361">
    <property type="entry name" value="MPP/UQCRC_Complex"/>
</dbReference>
<dbReference type="InterPro" id="IPR011765">
    <property type="entry name" value="Pept_M16_N"/>
</dbReference>
<dbReference type="InterPro" id="IPR001431">
    <property type="entry name" value="Pept_M16_Zn_BS"/>
</dbReference>
<dbReference type="InterPro" id="IPR007863">
    <property type="entry name" value="Peptidase_M16_C"/>
</dbReference>
<dbReference type="PANTHER" id="PTHR11851:SF149">
    <property type="entry name" value="GH01077P"/>
    <property type="match status" value="1"/>
</dbReference>
<dbReference type="PANTHER" id="PTHR11851">
    <property type="entry name" value="METALLOPROTEASE"/>
    <property type="match status" value="1"/>
</dbReference>
<dbReference type="Pfam" id="PF00675">
    <property type="entry name" value="Peptidase_M16"/>
    <property type="match status" value="1"/>
</dbReference>
<dbReference type="Pfam" id="PF05193">
    <property type="entry name" value="Peptidase_M16_C"/>
    <property type="match status" value="1"/>
</dbReference>
<dbReference type="SUPFAM" id="SSF63411">
    <property type="entry name" value="LuxS/MPP-like metallohydrolase"/>
    <property type="match status" value="2"/>
</dbReference>
<dbReference type="PROSITE" id="PS00143">
    <property type="entry name" value="INSULINASE"/>
    <property type="match status" value="1"/>
</dbReference>
<keyword id="KW-0002">3D-structure</keyword>
<keyword id="KW-0025">Alternative splicing</keyword>
<keyword id="KW-0378">Hydrolase</keyword>
<keyword id="KW-0472">Membrane</keyword>
<keyword id="KW-0479">Metal-binding</keyword>
<keyword id="KW-0482">Metalloprotease</keyword>
<keyword id="KW-0496">Mitochondrion</keyword>
<keyword id="KW-0999">Mitochondrion inner membrane</keyword>
<keyword id="KW-0560">Oxidoreductase</keyword>
<keyword id="KW-0645">Protease</keyword>
<keyword id="KW-1185">Reference proteome</keyword>
<keyword id="KW-0809">Transit peptide</keyword>
<keyword id="KW-0862">Zinc</keyword>
<gene>
    <name type="primary">MPPbeta</name>
    <name evidence="13" type="ordered locus">At3g02090</name>
    <name evidence="14" type="ORF">F1C9.12</name>
</gene>
<comment type="function">
    <text evidence="2 3">Catalytic subunit of the essential mitochondrial processing protease (MPP), which cleaves the mitochondrial sequence off newly imported precursors proteins (By similarity). Preferentially, cleaves after an arginine at position P2 (By similarity).</text>
</comment>
<comment type="function">
    <text evidence="1">Component of the ubiquinol-cytochrome c oxidoreductase, a multisubunit transmembrane complex that is part of the mitochondrial electron transport chain which drives oxidative phosphorylation. The respiratory chain contains 3 multisubunit complexes succinate dehydrogenase (complex II, CII), ubiquinol-cytochrome c oxidoreductase (cytochrome b-c1 complex, complex III, CIII) and cytochrome c oxidase (complex IV, CIV), that cooperate to transfer electrons derived from NADH and succinate to molecular oxygen, creating an electrochemical gradient over the inner membrane that drives transmembrane transport and the ATP synthase. The cytochrome b-c1 complex catalyzes electron transfer from ubiquinol to cytochrome c, linking this redox reaction to translocation of protons across the mitochondrial inner membrane, with protons being carried across the membrane as hydrogens on the quinol. In the process called Q cycle, 2 protons are consumed from the matrix, 4 protons are released into the intermembrane space and 2 electrons are passed to cytochrome c.</text>
</comment>
<comment type="catalytic activity">
    <reaction evidence="2">
        <text>Release of N-terminal transit peptides from precursor proteins imported into the mitochondrion, typically with Arg in position P2.</text>
        <dbReference type="EC" id="3.4.24.64"/>
    </reaction>
</comment>
<comment type="cofactor">
    <cofactor evidence="2">
        <name>Zn(2+)</name>
        <dbReference type="ChEBI" id="CHEBI:29105"/>
    </cofactor>
    <text evidence="2">Binds 1 zinc ion per subunit.</text>
</comment>
<comment type="activity regulation">
    <text evidence="2">Binding to the alpha subunit is required for catalytic activity.</text>
</comment>
<comment type="subunit">
    <text evidence="2 6 8 9">Heterodimer of an alpha subunit and a beta subunit subunits, forming the mitochondrial processing protease (MPP) in which the alpha subunit is involved in substrate recognition and binding and the beta subunit is the catalytic subunit (By similarity). Component of the ubiquinol-cytochrome c oxidoreductase (cytochrome b-c1 complex, complex III, CIII), a multisubunit enzyme composed of 10 subunits. The complex is composed of 3 respiratory subunits cytochrome b (MT-CYB), cytochrome c1 (CYC1-1 or CYC1-2) and Rieske protein (UCR1-1 or UCR1-2), 2 core protein subunits MPPalpha1 (or MPPalpha2) and MPPB, and 5 low-molecular weight protein subunits QCR7-1 (or QCR7-2), UCRQ-1 (or UCRQ-2), QCR9, UCRY and probably QCR6-1 (or QCR6-2) (PubMed:18189341, PubMed:18305213). The complex exists as an obligatory dimer and forms supercomplexes (SCs) in the inner mitochondrial membrane with NADH-ubiquinone oxidoreductase (complex I, CI), resulting in different assemblies (supercomplexes SCI(1)III(2) and SCI(2)III(4)) (PubMed:12970493).</text>
</comment>
<comment type="interaction">
    <interactant intactId="EBI-1777952">
        <id>Q42290</id>
    </interactant>
    <interactant intactId="EBI-2312095">
        <id>Q9LDU5</id>
        <label>TIFY11A</label>
    </interactant>
    <organismsDiffer>false</organismsDiffer>
    <experiments>3</experiments>
</comment>
<comment type="subcellular location">
    <subcellularLocation>
        <location evidence="7 12">Mitochondrion</location>
    </subcellularLocation>
    <subcellularLocation>
        <location evidence="8">Mitochondrion inner membrane</location>
        <topology evidence="1">Peripheral membrane protein</topology>
        <orientation evidence="1">Matrix side</orientation>
    </subcellularLocation>
</comment>
<comment type="alternative products">
    <event type="alternative splicing"/>
    <isoform>
        <id>Q42290-1</id>
        <name>1</name>
        <sequence type="displayed"/>
    </isoform>
    <isoform>
        <id>Q42290-2</id>
        <name>2</name>
        <sequence type="described" ref="VSP_018097"/>
    </isoform>
</comment>
<comment type="miscellaneous">
    <molecule>Isoform 2</molecule>
    <text evidence="11">May be due to a competing donor splice site.</text>
</comment>
<comment type="similarity">
    <text evidence="11">Belongs to the peptidase M16 family.</text>
</comment>